<protein>
    <recommendedName>
        <fullName>Methionine--tRNA ligase</fullName>
        <ecNumber>6.1.1.10</ecNumber>
    </recommendedName>
    <alternativeName>
        <fullName>Methionyl-tRNA synthetase</fullName>
        <shortName>MetRS</shortName>
    </alternativeName>
</protein>
<organism>
    <name type="scientific">Listeria innocua serovar 6a (strain ATCC BAA-680 / CLIP 11262)</name>
    <dbReference type="NCBI Taxonomy" id="272626"/>
    <lineage>
        <taxon>Bacteria</taxon>
        <taxon>Bacillati</taxon>
        <taxon>Bacillota</taxon>
        <taxon>Bacilli</taxon>
        <taxon>Bacillales</taxon>
        <taxon>Listeriaceae</taxon>
        <taxon>Listeria</taxon>
    </lineage>
</organism>
<keyword id="KW-0030">Aminoacyl-tRNA synthetase</keyword>
<keyword id="KW-0067">ATP-binding</keyword>
<keyword id="KW-0963">Cytoplasm</keyword>
<keyword id="KW-0436">Ligase</keyword>
<keyword id="KW-0547">Nucleotide-binding</keyword>
<keyword id="KW-0648">Protein biosynthesis</keyword>
<keyword id="KW-0694">RNA-binding</keyword>
<keyword id="KW-0820">tRNA-binding</keyword>
<sequence>MPEEKNTFYITTPIYYPSGKAHIGHAYTTVAGDAMARYKRLKGYDVFYLTGTDEHGQKIQAKAKERGISEQEYVDEIAEGFQELWKKLEISNTDFIRTTQDRHKTSVEKIFEQLLEQGDIYLGEYEGWYSVSDEEYFTETQLEEVYKDENGKVIGGKAPSGNEVELVKEESYFFRMSKYADRLVEYYNSHPEFILPESRKNEMINNFIKPGLEDLAVSRTTFDWGIKVPGNPKHVVYVWIDALSNYITALGYNTDNDTKFQKYWPADVQIVGKEIVRFHTIYWPIMLMALDLPLPKMVFGHGWILMKDGKMSKSKGNVVDPYMLIDRYGLDALRYYLLREVPFGSDGLFTPEDFVDRVNYDLANDLGNLLNRTVAMINKYFDGEIPAYQGNVTEFDQTLVDFKNNVVKEYEGSMDHMQFSVALNQLWSLISRTNKYIDETAPWALAKEEDKRTELASVMTHLAENLRIIAVLLQPFLTRTPGEIFLQLGLQEENLKKWDSIYGYGEIPEGTTVVKKGTPIFPRLDAEVEVTYIQDEMKGSAPAPAEETAEVEALETPQIGIEDFDKIDLRVAEVKQVDKVKKADKLLCFQLDLGEGKLRQVLSGIAEFYQPEELIGKKVIVVSNLKPVKLRGLMSEGMILSGEKDGKLSVIEANSALPNGAKVK</sequence>
<feature type="chain" id="PRO_0000139225" description="Methionine--tRNA ligase">
    <location>
        <begin position="1"/>
        <end position="664"/>
    </location>
</feature>
<feature type="domain" description="tRNA-binding">
    <location>
        <begin position="563"/>
        <end position="664"/>
    </location>
</feature>
<feature type="short sequence motif" description="'HIGH' region">
    <location>
        <begin position="15"/>
        <end position="25"/>
    </location>
</feature>
<feature type="short sequence motif" description="'KMSKS' region">
    <location>
        <begin position="310"/>
        <end position="314"/>
    </location>
</feature>
<feature type="binding site" evidence="1">
    <location>
        <position position="313"/>
    </location>
    <ligand>
        <name>ATP</name>
        <dbReference type="ChEBI" id="CHEBI:30616"/>
    </ligand>
</feature>
<reference key="1">
    <citation type="journal article" date="2001" name="Science">
        <title>Comparative genomics of Listeria species.</title>
        <authorList>
            <person name="Glaser P."/>
            <person name="Frangeul L."/>
            <person name="Buchrieser C."/>
            <person name="Rusniok C."/>
            <person name="Amend A."/>
            <person name="Baquero F."/>
            <person name="Berche P."/>
            <person name="Bloecker H."/>
            <person name="Brandt P."/>
            <person name="Chakraborty T."/>
            <person name="Charbit A."/>
            <person name="Chetouani F."/>
            <person name="Couve E."/>
            <person name="de Daruvar A."/>
            <person name="Dehoux P."/>
            <person name="Domann E."/>
            <person name="Dominguez-Bernal G."/>
            <person name="Duchaud E."/>
            <person name="Durant L."/>
            <person name="Dussurget O."/>
            <person name="Entian K.-D."/>
            <person name="Fsihi H."/>
            <person name="Garcia-del Portillo F."/>
            <person name="Garrido P."/>
            <person name="Gautier L."/>
            <person name="Goebel W."/>
            <person name="Gomez-Lopez N."/>
            <person name="Hain T."/>
            <person name="Hauf J."/>
            <person name="Jackson D."/>
            <person name="Jones L.-M."/>
            <person name="Kaerst U."/>
            <person name="Kreft J."/>
            <person name="Kuhn M."/>
            <person name="Kunst F."/>
            <person name="Kurapkat G."/>
            <person name="Madueno E."/>
            <person name="Maitournam A."/>
            <person name="Mata Vicente J."/>
            <person name="Ng E."/>
            <person name="Nedjari H."/>
            <person name="Nordsiek G."/>
            <person name="Novella S."/>
            <person name="de Pablos B."/>
            <person name="Perez-Diaz J.-C."/>
            <person name="Purcell R."/>
            <person name="Remmel B."/>
            <person name="Rose M."/>
            <person name="Schlueter T."/>
            <person name="Simoes N."/>
            <person name="Tierrez A."/>
            <person name="Vazquez-Boland J.-A."/>
            <person name="Voss H."/>
            <person name="Wehland J."/>
            <person name="Cossart P."/>
        </authorList>
    </citation>
    <scope>NUCLEOTIDE SEQUENCE [LARGE SCALE GENOMIC DNA]</scope>
    <source>
        <strain>ATCC BAA-680 / CLIP 11262</strain>
    </source>
</reference>
<gene>
    <name type="primary">metG</name>
    <name type="synonym">metS</name>
    <name type="ordered locus">lin0216</name>
</gene>
<dbReference type="EC" id="6.1.1.10"/>
<dbReference type="EMBL" id="AL596163">
    <property type="protein sequence ID" value="CAC95449.1"/>
    <property type="molecule type" value="Genomic_DNA"/>
</dbReference>
<dbReference type="PIR" id="AI1459">
    <property type="entry name" value="AI1459"/>
</dbReference>
<dbReference type="SMR" id="Q92F90"/>
<dbReference type="STRING" id="272626.gene:17564528"/>
<dbReference type="KEGG" id="lin:metS"/>
<dbReference type="eggNOG" id="COG0073">
    <property type="taxonomic scope" value="Bacteria"/>
</dbReference>
<dbReference type="eggNOG" id="COG0143">
    <property type="taxonomic scope" value="Bacteria"/>
</dbReference>
<dbReference type="HOGENOM" id="CLU_009710_9_4_9"/>
<dbReference type="Proteomes" id="UP000002513">
    <property type="component" value="Chromosome"/>
</dbReference>
<dbReference type="GO" id="GO:0005737">
    <property type="term" value="C:cytoplasm"/>
    <property type="evidence" value="ECO:0007669"/>
    <property type="project" value="UniProtKB-SubCell"/>
</dbReference>
<dbReference type="GO" id="GO:0005524">
    <property type="term" value="F:ATP binding"/>
    <property type="evidence" value="ECO:0007669"/>
    <property type="project" value="UniProtKB-UniRule"/>
</dbReference>
<dbReference type="GO" id="GO:0004825">
    <property type="term" value="F:methionine-tRNA ligase activity"/>
    <property type="evidence" value="ECO:0007669"/>
    <property type="project" value="UniProtKB-UniRule"/>
</dbReference>
<dbReference type="GO" id="GO:0000049">
    <property type="term" value="F:tRNA binding"/>
    <property type="evidence" value="ECO:0007669"/>
    <property type="project" value="UniProtKB-KW"/>
</dbReference>
<dbReference type="GO" id="GO:0006431">
    <property type="term" value="P:methionyl-tRNA aminoacylation"/>
    <property type="evidence" value="ECO:0007669"/>
    <property type="project" value="UniProtKB-UniRule"/>
</dbReference>
<dbReference type="CDD" id="cd07957">
    <property type="entry name" value="Anticodon_Ia_Met"/>
    <property type="match status" value="1"/>
</dbReference>
<dbReference type="CDD" id="cd00814">
    <property type="entry name" value="MetRS_core"/>
    <property type="match status" value="1"/>
</dbReference>
<dbReference type="CDD" id="cd02800">
    <property type="entry name" value="tRNA_bind_EcMetRS_like"/>
    <property type="match status" value="1"/>
</dbReference>
<dbReference type="FunFam" id="1.10.730.10:FF:000026">
    <property type="entry name" value="Methionine--tRNA ligase"/>
    <property type="match status" value="1"/>
</dbReference>
<dbReference type="FunFam" id="2.170.220.10:FF:000002">
    <property type="entry name" value="Methionine--tRNA ligase"/>
    <property type="match status" value="1"/>
</dbReference>
<dbReference type="FunFam" id="2.40.50.140:FF:000042">
    <property type="entry name" value="Methionine--tRNA ligase"/>
    <property type="match status" value="1"/>
</dbReference>
<dbReference type="Gene3D" id="2.170.220.10">
    <property type="match status" value="1"/>
</dbReference>
<dbReference type="Gene3D" id="3.40.50.620">
    <property type="entry name" value="HUPs"/>
    <property type="match status" value="1"/>
</dbReference>
<dbReference type="Gene3D" id="1.10.730.10">
    <property type="entry name" value="Isoleucyl-tRNA Synthetase, Domain 1"/>
    <property type="match status" value="1"/>
</dbReference>
<dbReference type="Gene3D" id="2.40.50.140">
    <property type="entry name" value="Nucleic acid-binding proteins"/>
    <property type="match status" value="1"/>
</dbReference>
<dbReference type="HAMAP" id="MF_01228">
    <property type="entry name" value="Met_tRNA_synth_type2"/>
    <property type="match status" value="1"/>
</dbReference>
<dbReference type="InterPro" id="IPR041872">
    <property type="entry name" value="Anticodon_Met"/>
</dbReference>
<dbReference type="InterPro" id="IPR004495">
    <property type="entry name" value="Met-tRNA-synth_bsu_C"/>
</dbReference>
<dbReference type="InterPro" id="IPR014758">
    <property type="entry name" value="Met-tRNA_synth"/>
</dbReference>
<dbReference type="InterPro" id="IPR023457">
    <property type="entry name" value="Met-tRNA_synth_2"/>
</dbReference>
<dbReference type="InterPro" id="IPR015413">
    <property type="entry name" value="Methionyl/Leucyl_tRNA_Synth"/>
</dbReference>
<dbReference type="InterPro" id="IPR033911">
    <property type="entry name" value="MetRS_core"/>
</dbReference>
<dbReference type="InterPro" id="IPR012340">
    <property type="entry name" value="NA-bd_OB-fold"/>
</dbReference>
<dbReference type="InterPro" id="IPR014729">
    <property type="entry name" value="Rossmann-like_a/b/a_fold"/>
</dbReference>
<dbReference type="InterPro" id="IPR002547">
    <property type="entry name" value="tRNA-bd_dom"/>
</dbReference>
<dbReference type="InterPro" id="IPR009080">
    <property type="entry name" value="tRNAsynth_Ia_anticodon-bd"/>
</dbReference>
<dbReference type="NCBIfam" id="TIGR00398">
    <property type="entry name" value="metG"/>
    <property type="match status" value="1"/>
</dbReference>
<dbReference type="NCBIfam" id="TIGR00399">
    <property type="entry name" value="metG_C_term"/>
    <property type="match status" value="1"/>
</dbReference>
<dbReference type="NCBIfam" id="NF008900">
    <property type="entry name" value="PRK12267.1"/>
    <property type="match status" value="1"/>
</dbReference>
<dbReference type="PANTHER" id="PTHR43326:SF1">
    <property type="entry name" value="METHIONINE--TRNA LIGASE, MITOCHONDRIAL"/>
    <property type="match status" value="1"/>
</dbReference>
<dbReference type="PANTHER" id="PTHR43326">
    <property type="entry name" value="METHIONYL-TRNA SYNTHETASE"/>
    <property type="match status" value="1"/>
</dbReference>
<dbReference type="Pfam" id="PF19303">
    <property type="entry name" value="Anticodon_3"/>
    <property type="match status" value="1"/>
</dbReference>
<dbReference type="Pfam" id="PF09334">
    <property type="entry name" value="tRNA-synt_1g"/>
    <property type="match status" value="1"/>
</dbReference>
<dbReference type="Pfam" id="PF01588">
    <property type="entry name" value="tRNA_bind"/>
    <property type="match status" value="1"/>
</dbReference>
<dbReference type="PRINTS" id="PR01041">
    <property type="entry name" value="TRNASYNTHMET"/>
</dbReference>
<dbReference type="SUPFAM" id="SSF47323">
    <property type="entry name" value="Anticodon-binding domain of a subclass of class I aminoacyl-tRNA synthetases"/>
    <property type="match status" value="1"/>
</dbReference>
<dbReference type="SUPFAM" id="SSF50249">
    <property type="entry name" value="Nucleic acid-binding proteins"/>
    <property type="match status" value="1"/>
</dbReference>
<dbReference type="SUPFAM" id="SSF52374">
    <property type="entry name" value="Nucleotidylyl transferase"/>
    <property type="match status" value="1"/>
</dbReference>
<dbReference type="PROSITE" id="PS50886">
    <property type="entry name" value="TRBD"/>
    <property type="match status" value="1"/>
</dbReference>
<accession>Q92F90</accession>
<comment type="function">
    <text evidence="1">Is required not only for elongation of protein synthesis but also for the initiation of all mRNA translation through initiator tRNA(fMet) aminoacylation.</text>
</comment>
<comment type="catalytic activity">
    <reaction>
        <text>tRNA(Met) + L-methionine + ATP = L-methionyl-tRNA(Met) + AMP + diphosphate</text>
        <dbReference type="Rhea" id="RHEA:13481"/>
        <dbReference type="Rhea" id="RHEA-COMP:9667"/>
        <dbReference type="Rhea" id="RHEA-COMP:9698"/>
        <dbReference type="ChEBI" id="CHEBI:30616"/>
        <dbReference type="ChEBI" id="CHEBI:33019"/>
        <dbReference type="ChEBI" id="CHEBI:57844"/>
        <dbReference type="ChEBI" id="CHEBI:78442"/>
        <dbReference type="ChEBI" id="CHEBI:78530"/>
        <dbReference type="ChEBI" id="CHEBI:456215"/>
        <dbReference type="EC" id="6.1.1.10"/>
    </reaction>
</comment>
<comment type="subunit">
    <text evidence="1">Homodimer.</text>
</comment>
<comment type="subcellular location">
    <subcellularLocation>
        <location evidence="1">Cytoplasm</location>
    </subcellularLocation>
</comment>
<comment type="similarity">
    <text evidence="2">Belongs to the class-I aminoacyl-tRNA synthetase family. MetG type 2B subfamily.</text>
</comment>
<proteinExistence type="inferred from homology"/>
<evidence type="ECO:0000250" key="1"/>
<evidence type="ECO:0000305" key="2"/>
<name>SYM_LISIN</name>